<dbReference type="EC" id="6.3.5.2" evidence="1"/>
<dbReference type="EMBL" id="CP000950">
    <property type="protein sequence ID" value="ACA67601.1"/>
    <property type="molecule type" value="Genomic_DNA"/>
</dbReference>
<dbReference type="RefSeq" id="WP_011192796.1">
    <property type="nucleotide sequence ID" value="NZ_CP009792.1"/>
</dbReference>
<dbReference type="SMR" id="B1JSB0"/>
<dbReference type="MEROPS" id="C26.957"/>
<dbReference type="GeneID" id="49785158"/>
<dbReference type="KEGG" id="ypy:YPK_1303"/>
<dbReference type="PATRIC" id="fig|502800.11.peg.1938"/>
<dbReference type="UniPathway" id="UPA00189">
    <property type="reaction ID" value="UER00296"/>
</dbReference>
<dbReference type="GO" id="GO:0005829">
    <property type="term" value="C:cytosol"/>
    <property type="evidence" value="ECO:0007669"/>
    <property type="project" value="TreeGrafter"/>
</dbReference>
<dbReference type="GO" id="GO:0005524">
    <property type="term" value="F:ATP binding"/>
    <property type="evidence" value="ECO:0007669"/>
    <property type="project" value="UniProtKB-UniRule"/>
</dbReference>
<dbReference type="GO" id="GO:0003921">
    <property type="term" value="F:GMP synthase activity"/>
    <property type="evidence" value="ECO:0007669"/>
    <property type="project" value="InterPro"/>
</dbReference>
<dbReference type="CDD" id="cd01742">
    <property type="entry name" value="GATase1_GMP_Synthase"/>
    <property type="match status" value="1"/>
</dbReference>
<dbReference type="CDD" id="cd01997">
    <property type="entry name" value="GMP_synthase_C"/>
    <property type="match status" value="1"/>
</dbReference>
<dbReference type="FunFam" id="3.30.300.10:FF:000002">
    <property type="entry name" value="GMP synthase [glutamine-hydrolyzing]"/>
    <property type="match status" value="1"/>
</dbReference>
<dbReference type="FunFam" id="3.40.50.620:FF:000001">
    <property type="entry name" value="GMP synthase [glutamine-hydrolyzing]"/>
    <property type="match status" value="1"/>
</dbReference>
<dbReference type="FunFam" id="3.40.50.880:FF:000001">
    <property type="entry name" value="GMP synthase [glutamine-hydrolyzing]"/>
    <property type="match status" value="1"/>
</dbReference>
<dbReference type="Gene3D" id="3.30.300.10">
    <property type="match status" value="1"/>
</dbReference>
<dbReference type="Gene3D" id="3.40.50.880">
    <property type="match status" value="1"/>
</dbReference>
<dbReference type="Gene3D" id="3.40.50.620">
    <property type="entry name" value="HUPs"/>
    <property type="match status" value="1"/>
</dbReference>
<dbReference type="HAMAP" id="MF_00344">
    <property type="entry name" value="GMP_synthase"/>
    <property type="match status" value="1"/>
</dbReference>
<dbReference type="InterPro" id="IPR029062">
    <property type="entry name" value="Class_I_gatase-like"/>
</dbReference>
<dbReference type="InterPro" id="IPR017926">
    <property type="entry name" value="GATASE"/>
</dbReference>
<dbReference type="InterPro" id="IPR001674">
    <property type="entry name" value="GMP_synth_C"/>
</dbReference>
<dbReference type="InterPro" id="IPR004739">
    <property type="entry name" value="GMP_synth_GATase"/>
</dbReference>
<dbReference type="InterPro" id="IPR022955">
    <property type="entry name" value="GMP_synthase"/>
</dbReference>
<dbReference type="InterPro" id="IPR025777">
    <property type="entry name" value="GMPS_ATP_PPase_dom"/>
</dbReference>
<dbReference type="InterPro" id="IPR022310">
    <property type="entry name" value="NAD/GMP_synthase"/>
</dbReference>
<dbReference type="InterPro" id="IPR014729">
    <property type="entry name" value="Rossmann-like_a/b/a_fold"/>
</dbReference>
<dbReference type="NCBIfam" id="TIGR00884">
    <property type="entry name" value="guaA_Cterm"/>
    <property type="match status" value="1"/>
</dbReference>
<dbReference type="NCBIfam" id="TIGR00888">
    <property type="entry name" value="guaA_Nterm"/>
    <property type="match status" value="1"/>
</dbReference>
<dbReference type="NCBIfam" id="NF000848">
    <property type="entry name" value="PRK00074.1"/>
    <property type="match status" value="1"/>
</dbReference>
<dbReference type="PANTHER" id="PTHR11922:SF2">
    <property type="entry name" value="GMP SYNTHASE [GLUTAMINE-HYDROLYZING]"/>
    <property type="match status" value="1"/>
</dbReference>
<dbReference type="PANTHER" id="PTHR11922">
    <property type="entry name" value="GMP SYNTHASE-RELATED"/>
    <property type="match status" value="1"/>
</dbReference>
<dbReference type="Pfam" id="PF00117">
    <property type="entry name" value="GATase"/>
    <property type="match status" value="1"/>
</dbReference>
<dbReference type="Pfam" id="PF00958">
    <property type="entry name" value="GMP_synt_C"/>
    <property type="match status" value="1"/>
</dbReference>
<dbReference type="Pfam" id="PF02540">
    <property type="entry name" value="NAD_synthase"/>
    <property type="match status" value="1"/>
</dbReference>
<dbReference type="PRINTS" id="PR00097">
    <property type="entry name" value="ANTSNTHASEII"/>
</dbReference>
<dbReference type="PRINTS" id="PR00096">
    <property type="entry name" value="GATASE"/>
</dbReference>
<dbReference type="SUPFAM" id="SSF52402">
    <property type="entry name" value="Adenine nucleotide alpha hydrolases-like"/>
    <property type="match status" value="1"/>
</dbReference>
<dbReference type="SUPFAM" id="SSF52317">
    <property type="entry name" value="Class I glutamine amidotransferase-like"/>
    <property type="match status" value="1"/>
</dbReference>
<dbReference type="SUPFAM" id="SSF54810">
    <property type="entry name" value="GMP synthetase C-terminal dimerisation domain"/>
    <property type="match status" value="1"/>
</dbReference>
<dbReference type="PROSITE" id="PS51273">
    <property type="entry name" value="GATASE_TYPE_1"/>
    <property type="match status" value="1"/>
</dbReference>
<dbReference type="PROSITE" id="PS51553">
    <property type="entry name" value="GMPS_ATP_PPASE"/>
    <property type="match status" value="1"/>
</dbReference>
<sequence length="525" mass="58392">MTKNIHKHRILILDFGSQYTQLLARRVREIGVYCELWAWDVTEAQIREFNPSGIILSGSPESTIENGSPRAPDYVFTAGVPVLGVCYGMQTMAIQLGGKVESSNQREFGYAQVEIKADSALIRDIKDAINPAGEAVLDVWMSHGDKVAEIPADFVTVASTDTCPFAIMANEEKRFYGVQFHPEVTHTKQGLRLLERFVLGICGCEALWTSATIIEDAIVRLREQIGDDHVILGLSGGVDSSVTAMLLHRAIGKRLTCVFVDNGLLRLNEADQVLEMFGDKFGLNIVHVAAEDRFLSALAGVDEPEAKRKIIGRVFVELFDEEACKQEQVKWLAQGTIYPDVIESAASATGKAHVIKSHHNVGGLPKEMKLGLVEPLKELFKDEVRKIGLELGLPYDMLYRHPFPGPGLGVRVLGEVKKEYCDLLRRADAIFIEELHKADLYNKVSQAFTVFLPVRSVGVMGDGRKYDWVVSLRAVETVDFMTAHWAHLPYDFLGRVSNRIINEVNGISRVVYDISGKPPATIEWE</sequence>
<gene>
    <name evidence="1" type="primary">guaA</name>
    <name type="ordered locus">YPK_1303</name>
</gene>
<name>GUAA_YERPY</name>
<accession>B1JSB0</accession>
<evidence type="ECO:0000255" key="1">
    <source>
        <dbReference type="HAMAP-Rule" id="MF_00344"/>
    </source>
</evidence>
<proteinExistence type="inferred from homology"/>
<reference key="1">
    <citation type="submission" date="2008-02" db="EMBL/GenBank/DDBJ databases">
        <title>Complete sequence of Yersinia pseudotuberculosis YPIII.</title>
        <authorList>
            <consortium name="US DOE Joint Genome Institute"/>
            <person name="Copeland A."/>
            <person name="Lucas S."/>
            <person name="Lapidus A."/>
            <person name="Glavina del Rio T."/>
            <person name="Dalin E."/>
            <person name="Tice H."/>
            <person name="Bruce D."/>
            <person name="Goodwin L."/>
            <person name="Pitluck S."/>
            <person name="Munk A.C."/>
            <person name="Brettin T."/>
            <person name="Detter J.C."/>
            <person name="Han C."/>
            <person name="Tapia R."/>
            <person name="Schmutz J."/>
            <person name="Larimer F."/>
            <person name="Land M."/>
            <person name="Hauser L."/>
            <person name="Challacombe J.F."/>
            <person name="Green L."/>
            <person name="Lindler L.E."/>
            <person name="Nikolich M.P."/>
            <person name="Richardson P."/>
        </authorList>
    </citation>
    <scope>NUCLEOTIDE SEQUENCE [LARGE SCALE GENOMIC DNA]</scope>
    <source>
        <strain>YPIII</strain>
    </source>
</reference>
<organism>
    <name type="scientific">Yersinia pseudotuberculosis serotype O:3 (strain YPIII)</name>
    <dbReference type="NCBI Taxonomy" id="502800"/>
    <lineage>
        <taxon>Bacteria</taxon>
        <taxon>Pseudomonadati</taxon>
        <taxon>Pseudomonadota</taxon>
        <taxon>Gammaproteobacteria</taxon>
        <taxon>Enterobacterales</taxon>
        <taxon>Yersiniaceae</taxon>
        <taxon>Yersinia</taxon>
    </lineage>
</organism>
<protein>
    <recommendedName>
        <fullName evidence="1">GMP synthase [glutamine-hydrolyzing]</fullName>
        <ecNumber evidence="1">6.3.5.2</ecNumber>
    </recommendedName>
    <alternativeName>
        <fullName evidence="1">GMP synthetase</fullName>
    </alternativeName>
    <alternativeName>
        <fullName evidence="1">Glutamine amidotransferase</fullName>
    </alternativeName>
</protein>
<keyword id="KW-0067">ATP-binding</keyword>
<keyword id="KW-0315">Glutamine amidotransferase</keyword>
<keyword id="KW-0332">GMP biosynthesis</keyword>
<keyword id="KW-0436">Ligase</keyword>
<keyword id="KW-0547">Nucleotide-binding</keyword>
<keyword id="KW-0658">Purine biosynthesis</keyword>
<comment type="function">
    <text evidence="1">Catalyzes the synthesis of GMP from XMP.</text>
</comment>
<comment type="catalytic activity">
    <reaction evidence="1">
        <text>XMP + L-glutamine + ATP + H2O = GMP + L-glutamate + AMP + diphosphate + 2 H(+)</text>
        <dbReference type="Rhea" id="RHEA:11680"/>
        <dbReference type="ChEBI" id="CHEBI:15377"/>
        <dbReference type="ChEBI" id="CHEBI:15378"/>
        <dbReference type="ChEBI" id="CHEBI:29985"/>
        <dbReference type="ChEBI" id="CHEBI:30616"/>
        <dbReference type="ChEBI" id="CHEBI:33019"/>
        <dbReference type="ChEBI" id="CHEBI:57464"/>
        <dbReference type="ChEBI" id="CHEBI:58115"/>
        <dbReference type="ChEBI" id="CHEBI:58359"/>
        <dbReference type="ChEBI" id="CHEBI:456215"/>
        <dbReference type="EC" id="6.3.5.2"/>
    </reaction>
</comment>
<comment type="pathway">
    <text evidence="1">Purine metabolism; GMP biosynthesis; GMP from XMP (L-Gln route): step 1/1.</text>
</comment>
<comment type="subunit">
    <text evidence="1">Homodimer.</text>
</comment>
<feature type="chain" id="PRO_1000120463" description="GMP synthase [glutamine-hydrolyzing]">
    <location>
        <begin position="1"/>
        <end position="525"/>
    </location>
</feature>
<feature type="domain" description="Glutamine amidotransferase type-1" evidence="1">
    <location>
        <begin position="9"/>
        <end position="207"/>
    </location>
</feature>
<feature type="domain" description="GMPS ATP-PPase" evidence="1">
    <location>
        <begin position="208"/>
        <end position="400"/>
    </location>
</feature>
<feature type="active site" description="Nucleophile" evidence="1">
    <location>
        <position position="86"/>
    </location>
</feature>
<feature type="active site" evidence="1">
    <location>
        <position position="181"/>
    </location>
</feature>
<feature type="active site" evidence="1">
    <location>
        <position position="183"/>
    </location>
</feature>
<feature type="binding site" evidence="1">
    <location>
        <begin position="235"/>
        <end position="241"/>
    </location>
    <ligand>
        <name>ATP</name>
        <dbReference type="ChEBI" id="CHEBI:30616"/>
    </ligand>
</feature>